<feature type="chain" id="PRO_0000253797" description="Protein lin-28 homolog">
    <location>
        <begin position="1"/>
        <end position="195"/>
    </location>
</feature>
<feature type="domain" description="CSD">
    <location>
        <begin position="38"/>
        <end position="104"/>
    </location>
</feature>
<feature type="zinc finger region" description="CCHC-type 1">
    <location>
        <begin position="126"/>
        <end position="143"/>
    </location>
</feature>
<feature type="zinc finger region" description="CCHC-type 2">
    <location>
        <begin position="148"/>
        <end position="165"/>
    </location>
</feature>
<feature type="region of interest" description="Disordered" evidence="2">
    <location>
        <begin position="1"/>
        <end position="31"/>
    </location>
</feature>
<feature type="region of interest" description="Disordered" evidence="2">
    <location>
        <begin position="164"/>
        <end position="195"/>
    </location>
</feature>
<feature type="compositionally biased region" description="Low complexity" evidence="2">
    <location>
        <begin position="170"/>
        <end position="188"/>
    </location>
</feature>
<feature type="binding site" evidence="1">
    <location>
        <position position="127"/>
    </location>
    <ligand>
        <name>Zn(2+)</name>
        <dbReference type="ChEBI" id="CHEBI:29105"/>
        <label>1</label>
    </ligand>
</feature>
<feature type="binding site" evidence="1">
    <location>
        <position position="130"/>
    </location>
    <ligand>
        <name>Zn(2+)</name>
        <dbReference type="ChEBI" id="CHEBI:29105"/>
        <label>1</label>
    </ligand>
</feature>
<feature type="binding site" evidence="1">
    <location>
        <position position="136"/>
    </location>
    <ligand>
        <name>Zn(2+)</name>
        <dbReference type="ChEBI" id="CHEBI:29105"/>
        <label>1</label>
    </ligand>
</feature>
<feature type="binding site" evidence="1">
    <location>
        <position position="141"/>
    </location>
    <ligand>
        <name>Zn(2+)</name>
        <dbReference type="ChEBI" id="CHEBI:29105"/>
        <label>1</label>
    </ligand>
</feature>
<feature type="binding site" evidence="1">
    <location>
        <position position="150"/>
    </location>
    <ligand>
        <name>Zn(2+)</name>
        <dbReference type="ChEBI" id="CHEBI:29105"/>
        <label>2</label>
    </ligand>
</feature>
<feature type="binding site" evidence="1">
    <location>
        <position position="153"/>
    </location>
    <ligand>
        <name>Zn(2+)</name>
        <dbReference type="ChEBI" id="CHEBI:29105"/>
        <label>2</label>
    </ligand>
</feature>
<feature type="binding site" evidence="1">
    <location>
        <position position="158"/>
    </location>
    <ligand>
        <name>Zn(2+)</name>
        <dbReference type="ChEBI" id="CHEBI:29105"/>
        <label>2</label>
    </ligand>
</feature>
<feature type="binding site" evidence="1">
    <location>
        <position position="163"/>
    </location>
    <ligand>
        <name>Zn(2+)</name>
        <dbReference type="ChEBI" id="CHEBI:29105"/>
        <label>2</label>
    </ligand>
</feature>
<comment type="subcellular location">
    <subcellularLocation>
        <location evidence="1">Cytoplasm</location>
    </subcellularLocation>
</comment>
<comment type="developmental stage">
    <text evidence="3">Expressed from embryogenesis to the first instar larval stage, then at the pupal stage. Not expressed at significant levels in the adult.</text>
</comment>
<comment type="similarity">
    <text evidence="4">Belongs to the lin-28 family.</text>
</comment>
<sequence>MENVQLENGLERRTTSQSSTSSANPANLASPTEECGCVRLGKCKWFNVAKGWGFLTPNDGGQEVFVHQSVIQMSGFRSLGEQEEVEFECQRTSRGLEATRVSSRHGGSCQGSTYRPRINRRTRRMRCYNCGEFANHIASECALGPQPKRCHRCRGEDHLHADCPHKNVTQSHSNSKSISNNSSSSAAQEKSEEAT</sequence>
<organism>
    <name type="scientific">Drosophila melanogaster</name>
    <name type="common">Fruit fly</name>
    <dbReference type="NCBI Taxonomy" id="7227"/>
    <lineage>
        <taxon>Eukaryota</taxon>
        <taxon>Metazoa</taxon>
        <taxon>Ecdysozoa</taxon>
        <taxon>Arthropoda</taxon>
        <taxon>Hexapoda</taxon>
        <taxon>Insecta</taxon>
        <taxon>Pterygota</taxon>
        <taxon>Neoptera</taxon>
        <taxon>Endopterygota</taxon>
        <taxon>Diptera</taxon>
        <taxon>Brachycera</taxon>
        <taxon>Muscomorpha</taxon>
        <taxon>Ephydroidea</taxon>
        <taxon>Drosophilidae</taxon>
        <taxon>Drosophila</taxon>
        <taxon>Sophophora</taxon>
    </lineage>
</organism>
<evidence type="ECO:0000250" key="1"/>
<evidence type="ECO:0000256" key="2">
    <source>
        <dbReference type="SAM" id="MobiDB-lite"/>
    </source>
</evidence>
<evidence type="ECO:0000269" key="3">
    <source>
    </source>
</evidence>
<evidence type="ECO:0000305" key="4"/>
<name>LIN28_DROME</name>
<protein>
    <recommendedName>
        <fullName>Protein lin-28 homolog</fullName>
    </recommendedName>
</protein>
<reference key="1">
    <citation type="journal article" date="2003" name="Dev. Biol.">
        <title>Conservation of the heterochronic regulator Lin-28, its developmental expression and microRNA complementary sites.</title>
        <authorList>
            <person name="Moss E.G."/>
            <person name="Tang L."/>
        </authorList>
    </citation>
    <scope>NUCLEOTIDE SEQUENCE [MRNA]</scope>
    <scope>DEVELOPMENTAL STAGE</scope>
</reference>
<reference key="2">
    <citation type="journal article" date="2003" name="Dev. Biol.">
        <authorList>
            <person name="Moss E.G."/>
            <person name="Tang L."/>
        </authorList>
    </citation>
    <scope>ERRATUM OF PUBMED:12798299</scope>
</reference>
<reference key="3">
    <citation type="journal article" date="2000" name="Science">
        <title>The genome sequence of Drosophila melanogaster.</title>
        <authorList>
            <person name="Adams M.D."/>
            <person name="Celniker S.E."/>
            <person name="Holt R.A."/>
            <person name="Evans C.A."/>
            <person name="Gocayne J.D."/>
            <person name="Amanatides P.G."/>
            <person name="Scherer S.E."/>
            <person name="Li P.W."/>
            <person name="Hoskins R.A."/>
            <person name="Galle R.F."/>
            <person name="George R.A."/>
            <person name="Lewis S.E."/>
            <person name="Richards S."/>
            <person name="Ashburner M."/>
            <person name="Henderson S.N."/>
            <person name="Sutton G.G."/>
            <person name="Wortman J.R."/>
            <person name="Yandell M.D."/>
            <person name="Zhang Q."/>
            <person name="Chen L.X."/>
            <person name="Brandon R.C."/>
            <person name="Rogers Y.-H.C."/>
            <person name="Blazej R.G."/>
            <person name="Champe M."/>
            <person name="Pfeiffer B.D."/>
            <person name="Wan K.H."/>
            <person name="Doyle C."/>
            <person name="Baxter E.G."/>
            <person name="Helt G."/>
            <person name="Nelson C.R."/>
            <person name="Miklos G.L.G."/>
            <person name="Abril J.F."/>
            <person name="Agbayani A."/>
            <person name="An H.-J."/>
            <person name="Andrews-Pfannkoch C."/>
            <person name="Baldwin D."/>
            <person name="Ballew R.M."/>
            <person name="Basu A."/>
            <person name="Baxendale J."/>
            <person name="Bayraktaroglu L."/>
            <person name="Beasley E.M."/>
            <person name="Beeson K.Y."/>
            <person name="Benos P.V."/>
            <person name="Berman B.P."/>
            <person name="Bhandari D."/>
            <person name="Bolshakov S."/>
            <person name="Borkova D."/>
            <person name="Botchan M.R."/>
            <person name="Bouck J."/>
            <person name="Brokstein P."/>
            <person name="Brottier P."/>
            <person name="Burtis K.C."/>
            <person name="Busam D.A."/>
            <person name="Butler H."/>
            <person name="Cadieu E."/>
            <person name="Center A."/>
            <person name="Chandra I."/>
            <person name="Cherry J.M."/>
            <person name="Cawley S."/>
            <person name="Dahlke C."/>
            <person name="Davenport L.B."/>
            <person name="Davies P."/>
            <person name="de Pablos B."/>
            <person name="Delcher A."/>
            <person name="Deng Z."/>
            <person name="Mays A.D."/>
            <person name="Dew I."/>
            <person name="Dietz S.M."/>
            <person name="Dodson K."/>
            <person name="Doup L.E."/>
            <person name="Downes M."/>
            <person name="Dugan-Rocha S."/>
            <person name="Dunkov B.C."/>
            <person name="Dunn P."/>
            <person name="Durbin K.J."/>
            <person name="Evangelista C.C."/>
            <person name="Ferraz C."/>
            <person name="Ferriera S."/>
            <person name="Fleischmann W."/>
            <person name="Fosler C."/>
            <person name="Gabrielian A.E."/>
            <person name="Garg N.S."/>
            <person name="Gelbart W.M."/>
            <person name="Glasser K."/>
            <person name="Glodek A."/>
            <person name="Gong F."/>
            <person name="Gorrell J.H."/>
            <person name="Gu Z."/>
            <person name="Guan P."/>
            <person name="Harris M."/>
            <person name="Harris N.L."/>
            <person name="Harvey D.A."/>
            <person name="Heiman T.J."/>
            <person name="Hernandez J.R."/>
            <person name="Houck J."/>
            <person name="Hostin D."/>
            <person name="Houston K.A."/>
            <person name="Howland T.J."/>
            <person name="Wei M.-H."/>
            <person name="Ibegwam C."/>
            <person name="Jalali M."/>
            <person name="Kalush F."/>
            <person name="Karpen G.H."/>
            <person name="Ke Z."/>
            <person name="Kennison J.A."/>
            <person name="Ketchum K.A."/>
            <person name="Kimmel B.E."/>
            <person name="Kodira C.D."/>
            <person name="Kraft C.L."/>
            <person name="Kravitz S."/>
            <person name="Kulp D."/>
            <person name="Lai Z."/>
            <person name="Lasko P."/>
            <person name="Lei Y."/>
            <person name="Levitsky A.A."/>
            <person name="Li J.H."/>
            <person name="Li Z."/>
            <person name="Liang Y."/>
            <person name="Lin X."/>
            <person name="Liu X."/>
            <person name="Mattei B."/>
            <person name="McIntosh T.C."/>
            <person name="McLeod M.P."/>
            <person name="McPherson D."/>
            <person name="Merkulov G."/>
            <person name="Milshina N.V."/>
            <person name="Mobarry C."/>
            <person name="Morris J."/>
            <person name="Moshrefi A."/>
            <person name="Mount S.M."/>
            <person name="Moy M."/>
            <person name="Murphy B."/>
            <person name="Murphy L."/>
            <person name="Muzny D.M."/>
            <person name="Nelson D.L."/>
            <person name="Nelson D.R."/>
            <person name="Nelson K.A."/>
            <person name="Nixon K."/>
            <person name="Nusskern D.R."/>
            <person name="Pacleb J.M."/>
            <person name="Palazzolo M."/>
            <person name="Pittman G.S."/>
            <person name="Pan S."/>
            <person name="Pollard J."/>
            <person name="Puri V."/>
            <person name="Reese M.G."/>
            <person name="Reinert K."/>
            <person name="Remington K."/>
            <person name="Saunders R.D.C."/>
            <person name="Scheeler F."/>
            <person name="Shen H."/>
            <person name="Shue B.C."/>
            <person name="Siden-Kiamos I."/>
            <person name="Simpson M."/>
            <person name="Skupski M.P."/>
            <person name="Smith T.J."/>
            <person name="Spier E."/>
            <person name="Spradling A.C."/>
            <person name="Stapleton M."/>
            <person name="Strong R."/>
            <person name="Sun E."/>
            <person name="Svirskas R."/>
            <person name="Tector C."/>
            <person name="Turner R."/>
            <person name="Venter E."/>
            <person name="Wang A.H."/>
            <person name="Wang X."/>
            <person name="Wang Z.-Y."/>
            <person name="Wassarman D.A."/>
            <person name="Weinstock G.M."/>
            <person name="Weissenbach J."/>
            <person name="Williams S.M."/>
            <person name="Woodage T."/>
            <person name="Worley K.C."/>
            <person name="Wu D."/>
            <person name="Yang S."/>
            <person name="Yao Q.A."/>
            <person name="Ye J."/>
            <person name="Yeh R.-F."/>
            <person name="Zaveri J.S."/>
            <person name="Zhan M."/>
            <person name="Zhang G."/>
            <person name="Zhao Q."/>
            <person name="Zheng L."/>
            <person name="Zheng X.H."/>
            <person name="Zhong F.N."/>
            <person name="Zhong W."/>
            <person name="Zhou X."/>
            <person name="Zhu S.C."/>
            <person name="Zhu X."/>
            <person name="Smith H.O."/>
            <person name="Gibbs R.A."/>
            <person name="Myers E.W."/>
            <person name="Rubin G.M."/>
            <person name="Venter J.C."/>
        </authorList>
    </citation>
    <scope>NUCLEOTIDE SEQUENCE [LARGE SCALE GENOMIC DNA]</scope>
    <source>
        <strain>Berkeley</strain>
    </source>
</reference>
<reference key="4">
    <citation type="journal article" date="2002" name="Genome Biol.">
        <title>Annotation of the Drosophila melanogaster euchromatic genome: a systematic review.</title>
        <authorList>
            <person name="Misra S."/>
            <person name="Crosby M.A."/>
            <person name="Mungall C.J."/>
            <person name="Matthews B.B."/>
            <person name="Campbell K.S."/>
            <person name="Hradecky P."/>
            <person name="Huang Y."/>
            <person name="Kaminker J.S."/>
            <person name="Millburn G.H."/>
            <person name="Prochnik S.E."/>
            <person name="Smith C.D."/>
            <person name="Tupy J.L."/>
            <person name="Whitfield E.J."/>
            <person name="Bayraktaroglu L."/>
            <person name="Berman B.P."/>
            <person name="Bettencourt B.R."/>
            <person name="Celniker S.E."/>
            <person name="de Grey A.D.N.J."/>
            <person name="Drysdale R.A."/>
            <person name="Harris N.L."/>
            <person name="Richter J."/>
            <person name="Russo S."/>
            <person name="Schroeder A.J."/>
            <person name="Shu S.Q."/>
            <person name="Stapleton M."/>
            <person name="Yamada C."/>
            <person name="Ashburner M."/>
            <person name="Gelbart W.M."/>
            <person name="Rubin G.M."/>
            <person name="Lewis S.E."/>
        </authorList>
    </citation>
    <scope>GENOME REANNOTATION</scope>
    <source>
        <strain>Berkeley</strain>
    </source>
</reference>
<reference key="5">
    <citation type="submission" date="2003-08" db="EMBL/GenBank/DDBJ databases">
        <authorList>
            <person name="Stapleton M."/>
            <person name="Brokstein P."/>
            <person name="Hong L."/>
            <person name="Agbayani A."/>
            <person name="Carlson J.W."/>
            <person name="Champe M."/>
            <person name="Chavez C."/>
            <person name="Dorsett V."/>
            <person name="Dresnek D."/>
            <person name="Farfan D."/>
            <person name="Frise E."/>
            <person name="George R.A."/>
            <person name="Gonzalez M."/>
            <person name="Guarin H."/>
            <person name="Kronmiller B."/>
            <person name="Li P.W."/>
            <person name="Liao G."/>
            <person name="Miranda A."/>
            <person name="Mungall C.J."/>
            <person name="Nunoo J."/>
            <person name="Pacleb J.M."/>
            <person name="Paragas V."/>
            <person name="Park S."/>
            <person name="Patel S."/>
            <person name="Phouanenavong S."/>
            <person name="Wan K.H."/>
            <person name="Yu C."/>
            <person name="Lewis S.E."/>
            <person name="Rubin G.M."/>
            <person name="Celniker S.E."/>
        </authorList>
    </citation>
    <scope>NUCLEOTIDE SEQUENCE [LARGE SCALE MRNA]</scope>
    <source>
        <strain>Berkeley</strain>
    </source>
</reference>
<keyword id="KW-0963">Cytoplasm</keyword>
<keyword id="KW-0479">Metal-binding</keyword>
<keyword id="KW-1185">Reference proteome</keyword>
<keyword id="KW-0677">Repeat</keyword>
<keyword id="KW-0862">Zinc</keyword>
<keyword id="KW-0863">Zinc-finger</keyword>
<proteinExistence type="evidence at transcript level"/>
<dbReference type="EMBL" id="AF521096">
    <property type="protein sequence ID" value="AAM77748.1"/>
    <property type="molecule type" value="mRNA"/>
</dbReference>
<dbReference type="EMBL" id="AE014296">
    <property type="protein sequence ID" value="AAF50758.2"/>
    <property type="molecule type" value="Genomic_DNA"/>
</dbReference>
<dbReference type="EMBL" id="AY118360">
    <property type="protein sequence ID" value="AAM48389.1"/>
    <property type="molecule type" value="mRNA"/>
</dbReference>
<dbReference type="RefSeq" id="NP_647983.1">
    <property type="nucleotide sequence ID" value="NM_139726.2"/>
</dbReference>
<dbReference type="SMR" id="Q9VRN5"/>
<dbReference type="BioGRID" id="64102">
    <property type="interactions" value="10"/>
</dbReference>
<dbReference type="FunCoup" id="Q9VRN5">
    <property type="interactions" value="15"/>
</dbReference>
<dbReference type="IntAct" id="Q9VRN5">
    <property type="interactions" value="6"/>
</dbReference>
<dbReference type="STRING" id="7227.FBpp0076798"/>
<dbReference type="PaxDb" id="7227-FBpp0076798"/>
<dbReference type="DNASU" id="38639"/>
<dbReference type="EnsemblMetazoa" id="FBtr0077090">
    <property type="protein sequence ID" value="FBpp0076798"/>
    <property type="gene ID" value="FBgn0035626"/>
</dbReference>
<dbReference type="GeneID" id="38639"/>
<dbReference type="KEGG" id="dme:Dmel_CG17334"/>
<dbReference type="UCSC" id="CG17334-RA">
    <property type="organism name" value="d. melanogaster"/>
</dbReference>
<dbReference type="AGR" id="FB:FBgn0035626"/>
<dbReference type="CTD" id="38639"/>
<dbReference type="FlyBase" id="FBgn0035626">
    <property type="gene designation" value="lin-28"/>
</dbReference>
<dbReference type="VEuPathDB" id="VectorBase:FBgn0035626"/>
<dbReference type="eggNOG" id="KOG3070">
    <property type="taxonomic scope" value="Eukaryota"/>
</dbReference>
<dbReference type="GeneTree" id="ENSGT00940000171032"/>
<dbReference type="HOGENOM" id="CLU_089169_4_0_1"/>
<dbReference type="InParanoid" id="Q9VRN5"/>
<dbReference type="OMA" id="KACYGCH"/>
<dbReference type="OrthoDB" id="422005at2759"/>
<dbReference type="PhylomeDB" id="Q9VRN5"/>
<dbReference type="SignaLink" id="Q9VRN5"/>
<dbReference type="BioGRID-ORCS" id="38639">
    <property type="hits" value="0 hits in 3 CRISPR screens"/>
</dbReference>
<dbReference type="GenomeRNAi" id="38639"/>
<dbReference type="PRO" id="PR:Q9VRN5"/>
<dbReference type="Proteomes" id="UP000000803">
    <property type="component" value="Chromosome 3L"/>
</dbReference>
<dbReference type="Bgee" id="FBgn0035626">
    <property type="expression patterns" value="Expressed in adult Malpighian tubule stellate cell of main segment in Malpighian tubule and 46 other cell types or tissues"/>
</dbReference>
<dbReference type="GO" id="GO:0005737">
    <property type="term" value="C:cytoplasm"/>
    <property type="evidence" value="ECO:0000318"/>
    <property type="project" value="GO_Central"/>
</dbReference>
<dbReference type="GO" id="GO:0010494">
    <property type="term" value="C:cytoplasmic stress granule"/>
    <property type="evidence" value="ECO:0000314"/>
    <property type="project" value="FlyBase"/>
</dbReference>
<dbReference type="GO" id="GO:0005829">
    <property type="term" value="C:cytosol"/>
    <property type="evidence" value="ECO:0000314"/>
    <property type="project" value="FlyBase"/>
</dbReference>
<dbReference type="GO" id="GO:0005634">
    <property type="term" value="C:nucleus"/>
    <property type="evidence" value="ECO:0000318"/>
    <property type="project" value="GO_Central"/>
</dbReference>
<dbReference type="GO" id="GO:0003730">
    <property type="term" value="F:mRNA 3'-UTR binding"/>
    <property type="evidence" value="ECO:0000314"/>
    <property type="project" value="FlyBase"/>
</dbReference>
<dbReference type="GO" id="GO:0003729">
    <property type="term" value="F:mRNA binding"/>
    <property type="evidence" value="ECO:0000314"/>
    <property type="project" value="FlyBase"/>
</dbReference>
<dbReference type="GO" id="GO:0008270">
    <property type="term" value="F:zinc ion binding"/>
    <property type="evidence" value="ECO:0007669"/>
    <property type="project" value="UniProtKB-KW"/>
</dbReference>
<dbReference type="GO" id="GO:0070935">
    <property type="term" value="P:3'-UTR-mediated mRNA stabilization"/>
    <property type="evidence" value="ECO:0000314"/>
    <property type="project" value="FlyBase"/>
</dbReference>
<dbReference type="GO" id="GO:0060250">
    <property type="term" value="P:germ-line stem-cell niche homeostasis"/>
    <property type="evidence" value="ECO:0000315"/>
    <property type="project" value="FlyBase"/>
</dbReference>
<dbReference type="GO" id="GO:2000632">
    <property type="term" value="P:negative regulation of pre-miRNA processing"/>
    <property type="evidence" value="ECO:0000315"/>
    <property type="project" value="FlyBase"/>
</dbReference>
<dbReference type="GO" id="GO:0048477">
    <property type="term" value="P:oogenesis"/>
    <property type="evidence" value="ECO:0000315"/>
    <property type="project" value="FlyBase"/>
</dbReference>
<dbReference type="GO" id="GO:0046628">
    <property type="term" value="P:positive regulation of insulin receptor signaling pathway"/>
    <property type="evidence" value="ECO:0000315"/>
    <property type="project" value="FlyBase"/>
</dbReference>
<dbReference type="GO" id="GO:0046427">
    <property type="term" value="P:positive regulation of receptor signaling pathway via JAK-STAT"/>
    <property type="evidence" value="ECO:0000315"/>
    <property type="project" value="FlyBase"/>
</dbReference>
<dbReference type="GO" id="GO:2000648">
    <property type="term" value="P:positive regulation of stem cell proliferation"/>
    <property type="evidence" value="ECO:0000315"/>
    <property type="project" value="FlyBase"/>
</dbReference>
<dbReference type="GO" id="GO:0048621">
    <property type="term" value="P:post-embryonic digestive tract morphogenesis"/>
    <property type="evidence" value="ECO:0000315"/>
    <property type="project" value="FlyBase"/>
</dbReference>
<dbReference type="GO" id="GO:0010608">
    <property type="term" value="P:post-transcriptional regulation of gene expression"/>
    <property type="evidence" value="ECO:0000315"/>
    <property type="project" value="FlyBase"/>
</dbReference>
<dbReference type="GO" id="GO:0031054">
    <property type="term" value="P:pre-miRNA processing"/>
    <property type="evidence" value="ECO:0000318"/>
    <property type="project" value="GO_Central"/>
</dbReference>
<dbReference type="GO" id="GO:0098724">
    <property type="term" value="P:symmetric stem cell division"/>
    <property type="evidence" value="ECO:0000315"/>
    <property type="project" value="FlyBase"/>
</dbReference>
<dbReference type="CDD" id="cd04458">
    <property type="entry name" value="CSP_CDS"/>
    <property type="match status" value="1"/>
</dbReference>
<dbReference type="Gene3D" id="2.40.50.140">
    <property type="entry name" value="Nucleic acid-binding proteins"/>
    <property type="match status" value="1"/>
</dbReference>
<dbReference type="Gene3D" id="4.10.60.10">
    <property type="entry name" value="Zinc finger, CCHC-type"/>
    <property type="match status" value="1"/>
</dbReference>
<dbReference type="InterPro" id="IPR011129">
    <property type="entry name" value="CSD"/>
</dbReference>
<dbReference type="InterPro" id="IPR002059">
    <property type="entry name" value="CSP_DNA-bd"/>
</dbReference>
<dbReference type="InterPro" id="IPR051373">
    <property type="entry name" value="Lin-28_RNA-binding"/>
</dbReference>
<dbReference type="InterPro" id="IPR012340">
    <property type="entry name" value="NA-bd_OB-fold"/>
</dbReference>
<dbReference type="InterPro" id="IPR001878">
    <property type="entry name" value="Znf_CCHC"/>
</dbReference>
<dbReference type="InterPro" id="IPR036875">
    <property type="entry name" value="Znf_CCHC_sf"/>
</dbReference>
<dbReference type="PANTHER" id="PTHR46109">
    <property type="entry name" value="PROTEIN LIN-28"/>
    <property type="match status" value="1"/>
</dbReference>
<dbReference type="PANTHER" id="PTHR46109:SF1">
    <property type="entry name" value="PROTEIN LIN-28 HOMOLOG"/>
    <property type="match status" value="1"/>
</dbReference>
<dbReference type="Pfam" id="PF00313">
    <property type="entry name" value="CSD"/>
    <property type="match status" value="1"/>
</dbReference>
<dbReference type="PRINTS" id="PR00050">
    <property type="entry name" value="COLDSHOCK"/>
</dbReference>
<dbReference type="SMART" id="SM00357">
    <property type="entry name" value="CSP"/>
    <property type="match status" value="1"/>
</dbReference>
<dbReference type="SMART" id="SM00343">
    <property type="entry name" value="ZnF_C2HC"/>
    <property type="match status" value="2"/>
</dbReference>
<dbReference type="SUPFAM" id="SSF50249">
    <property type="entry name" value="Nucleic acid-binding proteins"/>
    <property type="match status" value="1"/>
</dbReference>
<dbReference type="SUPFAM" id="SSF57756">
    <property type="entry name" value="Retrovirus zinc finger-like domains"/>
    <property type="match status" value="1"/>
</dbReference>
<dbReference type="PROSITE" id="PS51857">
    <property type="entry name" value="CSD_2"/>
    <property type="match status" value="1"/>
</dbReference>
<gene>
    <name type="primary">lin-28</name>
    <name type="ORF">CG17334</name>
</gene>
<accession>Q9VRN5</accession>